<protein>
    <recommendedName>
        <fullName evidence="1">Acyl-[acyl-carrier-protein]--UDP-N-acetylglucosamine O-acyltransferase</fullName>
        <shortName evidence="1">UDP-N-acetylglucosamine acyltransferase</shortName>
        <ecNumber evidence="1">2.3.1.129</ecNumber>
    </recommendedName>
</protein>
<proteinExistence type="inferred from homology"/>
<keyword id="KW-0012">Acyltransferase</keyword>
<keyword id="KW-0963">Cytoplasm</keyword>
<keyword id="KW-0441">Lipid A biosynthesis</keyword>
<keyword id="KW-0444">Lipid biosynthesis</keyword>
<keyword id="KW-0443">Lipid metabolism</keyword>
<keyword id="KW-1185">Reference proteome</keyword>
<keyword id="KW-0677">Repeat</keyword>
<keyword id="KW-0808">Transferase</keyword>
<name>LPXA_CHLPD</name>
<evidence type="ECO:0000255" key="1">
    <source>
        <dbReference type="HAMAP-Rule" id="MF_00387"/>
    </source>
</evidence>
<dbReference type="EC" id="2.3.1.129" evidence="1"/>
<dbReference type="EMBL" id="CP000492">
    <property type="protein sequence ID" value="ABL66361.1"/>
    <property type="molecule type" value="Genomic_DNA"/>
</dbReference>
<dbReference type="RefSeq" id="WP_011746146.1">
    <property type="nucleotide sequence ID" value="NC_008639.1"/>
</dbReference>
<dbReference type="SMR" id="A1BIY4"/>
<dbReference type="STRING" id="290317.Cpha266_2373"/>
<dbReference type="KEGG" id="cph:Cpha266_2373"/>
<dbReference type="eggNOG" id="COG1043">
    <property type="taxonomic scope" value="Bacteria"/>
</dbReference>
<dbReference type="HOGENOM" id="CLU_061249_0_0_10"/>
<dbReference type="OrthoDB" id="9807278at2"/>
<dbReference type="UniPathway" id="UPA00359">
    <property type="reaction ID" value="UER00477"/>
</dbReference>
<dbReference type="Proteomes" id="UP000008701">
    <property type="component" value="Chromosome"/>
</dbReference>
<dbReference type="GO" id="GO:0005737">
    <property type="term" value="C:cytoplasm"/>
    <property type="evidence" value="ECO:0007669"/>
    <property type="project" value="UniProtKB-SubCell"/>
</dbReference>
<dbReference type="GO" id="GO:0016020">
    <property type="term" value="C:membrane"/>
    <property type="evidence" value="ECO:0007669"/>
    <property type="project" value="GOC"/>
</dbReference>
<dbReference type="GO" id="GO:0008780">
    <property type="term" value="F:acyl-[acyl-carrier-protein]-UDP-N-acetylglucosamine O-acyltransferase activity"/>
    <property type="evidence" value="ECO:0007669"/>
    <property type="project" value="UniProtKB-UniRule"/>
</dbReference>
<dbReference type="GO" id="GO:0009245">
    <property type="term" value="P:lipid A biosynthetic process"/>
    <property type="evidence" value="ECO:0007669"/>
    <property type="project" value="UniProtKB-UniRule"/>
</dbReference>
<dbReference type="CDD" id="cd03351">
    <property type="entry name" value="LbH_UDP-GlcNAc_AT"/>
    <property type="match status" value="1"/>
</dbReference>
<dbReference type="Gene3D" id="2.160.10.10">
    <property type="entry name" value="Hexapeptide repeat proteins"/>
    <property type="match status" value="1"/>
</dbReference>
<dbReference type="Gene3D" id="1.20.1180.10">
    <property type="entry name" value="Udp N-acetylglucosamine O-acyltransferase, C-terminal domain"/>
    <property type="match status" value="1"/>
</dbReference>
<dbReference type="HAMAP" id="MF_00387">
    <property type="entry name" value="LpxA"/>
    <property type="match status" value="1"/>
</dbReference>
<dbReference type="InterPro" id="IPR029098">
    <property type="entry name" value="Acetyltransf_C"/>
</dbReference>
<dbReference type="InterPro" id="IPR037157">
    <property type="entry name" value="Acetyltransf_C_sf"/>
</dbReference>
<dbReference type="InterPro" id="IPR001451">
    <property type="entry name" value="Hexapep"/>
</dbReference>
<dbReference type="InterPro" id="IPR010137">
    <property type="entry name" value="Lipid_A_LpxA"/>
</dbReference>
<dbReference type="InterPro" id="IPR011004">
    <property type="entry name" value="Trimer_LpxA-like_sf"/>
</dbReference>
<dbReference type="NCBIfam" id="TIGR01852">
    <property type="entry name" value="lipid_A_lpxA"/>
    <property type="match status" value="1"/>
</dbReference>
<dbReference type="NCBIfam" id="NF003657">
    <property type="entry name" value="PRK05289.1"/>
    <property type="match status" value="1"/>
</dbReference>
<dbReference type="PANTHER" id="PTHR43480">
    <property type="entry name" value="ACYL-[ACYL-CARRIER-PROTEIN]--UDP-N-ACETYLGLUCOSAMINE O-ACYLTRANSFERASE"/>
    <property type="match status" value="1"/>
</dbReference>
<dbReference type="PANTHER" id="PTHR43480:SF1">
    <property type="entry name" value="ACYL-[ACYL-CARRIER-PROTEIN]--UDP-N-ACETYLGLUCOSAMINE O-ACYLTRANSFERASE, MITOCHONDRIAL-RELATED"/>
    <property type="match status" value="1"/>
</dbReference>
<dbReference type="Pfam" id="PF13720">
    <property type="entry name" value="Acetyltransf_11"/>
    <property type="match status" value="1"/>
</dbReference>
<dbReference type="Pfam" id="PF00132">
    <property type="entry name" value="Hexapep"/>
    <property type="match status" value="2"/>
</dbReference>
<dbReference type="PIRSF" id="PIRSF000456">
    <property type="entry name" value="UDP-GlcNAc_acltr"/>
    <property type="match status" value="1"/>
</dbReference>
<dbReference type="SUPFAM" id="SSF51161">
    <property type="entry name" value="Trimeric LpxA-like enzymes"/>
    <property type="match status" value="1"/>
</dbReference>
<feature type="chain" id="PRO_1000122694" description="Acyl-[acyl-carrier-protein]--UDP-N-acetylglucosamine O-acyltransferase">
    <location>
        <begin position="1"/>
        <end position="264"/>
    </location>
</feature>
<gene>
    <name evidence="1" type="primary">lpxA</name>
    <name type="ordered locus">Cpha266_2373</name>
</gene>
<accession>A1BIY4</accession>
<sequence>MNTIHATAIIDPGVTLGDKVTIGPYTVIEDDVEIGEGTRIGPHVHIASGARIGSACRIHAGAVLATEPQDLKYAGEKTQLIVGDRTVIRECVTLNRGTKASGRTVVGSDTLVMSYVHAGHDCVIGNHVVIANSVQFGGHCEVGDYAVIGGLTGVHQFVRIGRYSMVGGIARASLDVPPFVMAGGHASFRYEGLNSLGLKRRGFTAEKISMIKDVYRIIFQSGLLLSNALEKVRTDFPAEPEIVEILRFFDSGTHGRKFLRPFNS</sequence>
<organism>
    <name type="scientific">Chlorobium phaeobacteroides (strain DSM 266 / SMG 266 / 2430)</name>
    <dbReference type="NCBI Taxonomy" id="290317"/>
    <lineage>
        <taxon>Bacteria</taxon>
        <taxon>Pseudomonadati</taxon>
        <taxon>Chlorobiota</taxon>
        <taxon>Chlorobiia</taxon>
        <taxon>Chlorobiales</taxon>
        <taxon>Chlorobiaceae</taxon>
        <taxon>Chlorobium/Pelodictyon group</taxon>
        <taxon>Chlorobium</taxon>
    </lineage>
</organism>
<comment type="function">
    <text evidence="1">Involved in the biosynthesis of lipid A, a phosphorylated glycolipid that anchors the lipopolysaccharide to the outer membrane of the cell.</text>
</comment>
<comment type="catalytic activity">
    <reaction evidence="1">
        <text>a (3R)-hydroxyacyl-[ACP] + UDP-N-acetyl-alpha-D-glucosamine = a UDP-3-O-[(3R)-3-hydroxyacyl]-N-acetyl-alpha-D-glucosamine + holo-[ACP]</text>
        <dbReference type="Rhea" id="RHEA:67812"/>
        <dbReference type="Rhea" id="RHEA-COMP:9685"/>
        <dbReference type="Rhea" id="RHEA-COMP:9945"/>
        <dbReference type="ChEBI" id="CHEBI:57705"/>
        <dbReference type="ChEBI" id="CHEBI:64479"/>
        <dbReference type="ChEBI" id="CHEBI:78827"/>
        <dbReference type="ChEBI" id="CHEBI:173225"/>
        <dbReference type="EC" id="2.3.1.129"/>
    </reaction>
</comment>
<comment type="pathway">
    <text evidence="1">Glycolipid biosynthesis; lipid IV(A) biosynthesis; lipid IV(A) from (3R)-3-hydroxytetradecanoyl-[acyl-carrier-protein] and UDP-N-acetyl-alpha-D-glucosamine: step 1/6.</text>
</comment>
<comment type="subunit">
    <text evidence="1">Homotrimer.</text>
</comment>
<comment type="subcellular location">
    <subcellularLocation>
        <location evidence="1">Cytoplasm</location>
    </subcellularLocation>
</comment>
<comment type="similarity">
    <text evidence="1">Belongs to the transferase hexapeptide repeat family. LpxA subfamily.</text>
</comment>
<reference key="1">
    <citation type="submission" date="2006-12" db="EMBL/GenBank/DDBJ databases">
        <title>Complete sequence of Chlorobium phaeobacteroides DSM 266.</title>
        <authorList>
            <consortium name="US DOE Joint Genome Institute"/>
            <person name="Copeland A."/>
            <person name="Lucas S."/>
            <person name="Lapidus A."/>
            <person name="Barry K."/>
            <person name="Detter J.C."/>
            <person name="Glavina del Rio T."/>
            <person name="Hammon N."/>
            <person name="Israni S."/>
            <person name="Pitluck S."/>
            <person name="Goltsman E."/>
            <person name="Schmutz J."/>
            <person name="Larimer F."/>
            <person name="Land M."/>
            <person name="Hauser L."/>
            <person name="Mikhailova N."/>
            <person name="Li T."/>
            <person name="Overmann J."/>
            <person name="Bryant D.A."/>
            <person name="Richardson P."/>
        </authorList>
    </citation>
    <scope>NUCLEOTIDE SEQUENCE [LARGE SCALE GENOMIC DNA]</scope>
    <source>
        <strain>DSM 266 / SMG 266 / 2430</strain>
    </source>
</reference>